<evidence type="ECO:0000250" key="1"/>
<evidence type="ECO:0000255" key="2"/>
<evidence type="ECO:0000255" key="3">
    <source>
        <dbReference type="PROSITE-ProRule" id="PRU00280"/>
    </source>
</evidence>
<evidence type="ECO:0000305" key="4"/>
<sequence length="794" mass="85495">MTEQKKTTIGITGMTCAACANRIEKNLNKLDDVEANVNVTTEKATISYNPESTSADDLTKTIEKTGYGVLNETAELDVIGMTCAACSNRIEKVLNRTDGVDQATVNLTTENATISYNPSATSVDALIKKIQKIGYDAQPKKEVAEKSSQKELELRSKLVKLIISAVLAAPLLLTMLVHLFGIQIPSIFMNPWFQFILATPVQFIIGWQFYVGAYKNLRNGSANMDVLVALGTSAAYFYSLYEMVKWLFNANVMPHLYFETSAVLITLILFGKYLETRAKTQTTNALSELLNLQAKEARVLRDNKEQMIPLNDVVEGDYLIIKPGEKIPVDGKIIKGKTSIDESMLTGESMPVEKVQDDNVIGSTMNKNGSITVKATKVGKDTALASIIKVVEEAQGSKAPIQRLADVISGYFVPIVVGIAVLTFIIWIAFVQQGQFEPALVAAIAVLVIACPCALGLATPTSIMVGTGKAAENGILFKGGEHIERTHQIDTVVLDKTGTITNGKPVVTDFDGDEEALQLLASAEKGSEHPLADAIVNYAQTMNIKLLDTTDFEAVPGRGIKANISGKNLIVGNRQFMNDENVDIKDSEDIMTQFEKSGKTAMLIAINQEYRGMVAVADTVKDSTATAIKQLHDLNIKVVMLTGDNERTAQAIANEVGIDTIIAQVLPEEKAAKIKSLQTQDKTIAMVGDGVNDAPALVQADIGIAIGTGTEVAIEAADVTILGGDLLLIPKAIKASKATIRNIRQNLFWAFGYNVAGIPIAALGLLAPWIAGAAMALSSVSVVTNALRLKRMKL</sequence>
<feature type="chain" id="PRO_0000350600" description="Copper-exporting P-type ATPase">
    <location>
        <begin position="1"/>
        <end position="794"/>
    </location>
</feature>
<feature type="transmembrane region" description="Helical" evidence="2">
    <location>
        <begin position="162"/>
        <end position="182"/>
    </location>
</feature>
<feature type="transmembrane region" description="Helical" evidence="2">
    <location>
        <begin position="187"/>
        <end position="207"/>
    </location>
</feature>
<feature type="transmembrane region" description="Helical" evidence="2">
    <location>
        <begin position="224"/>
        <end position="244"/>
    </location>
</feature>
<feature type="transmembrane region" description="Helical" evidence="2">
    <location>
        <begin position="250"/>
        <end position="270"/>
    </location>
</feature>
<feature type="transmembrane region" description="Helical" evidence="2">
    <location>
        <begin position="411"/>
        <end position="431"/>
    </location>
</feature>
<feature type="transmembrane region" description="Helical" evidence="2">
    <location>
        <begin position="438"/>
        <end position="458"/>
    </location>
</feature>
<feature type="transmembrane region" description="Helical" evidence="2">
    <location>
        <begin position="747"/>
        <end position="766"/>
    </location>
</feature>
<feature type="transmembrane region" description="Helical" evidence="2">
    <location>
        <begin position="770"/>
        <end position="789"/>
    </location>
</feature>
<feature type="domain" description="HMA 1" evidence="3">
    <location>
        <begin position="5"/>
        <end position="70"/>
    </location>
</feature>
<feature type="domain" description="HMA 2" evidence="3">
    <location>
        <begin position="72"/>
        <end position="138"/>
    </location>
</feature>
<feature type="active site" description="4-aspartylphosphate intermediate" evidence="1">
    <location>
        <position position="495"/>
    </location>
</feature>
<feature type="binding site" evidence="3">
    <location>
        <position position="16"/>
    </location>
    <ligand>
        <name>Cu(+)</name>
        <dbReference type="ChEBI" id="CHEBI:49552"/>
        <label>1</label>
    </ligand>
</feature>
<feature type="binding site" evidence="3">
    <location>
        <position position="19"/>
    </location>
    <ligand>
        <name>Cu(+)</name>
        <dbReference type="ChEBI" id="CHEBI:49552"/>
        <label>1</label>
    </ligand>
</feature>
<feature type="binding site" evidence="3">
    <location>
        <position position="83"/>
    </location>
    <ligand>
        <name>Cu(+)</name>
        <dbReference type="ChEBI" id="CHEBI:49552"/>
        <label>2</label>
    </ligand>
</feature>
<feature type="binding site" evidence="3">
    <location>
        <position position="86"/>
    </location>
    <ligand>
        <name>Cu(+)</name>
        <dbReference type="ChEBI" id="CHEBI:49552"/>
        <label>2</label>
    </ligand>
</feature>
<feature type="binding site">
    <location>
        <position position="689"/>
    </location>
    <ligand>
        <name>Mg(2+)</name>
        <dbReference type="ChEBI" id="CHEBI:18420"/>
    </ligand>
</feature>
<feature type="binding site">
    <location>
        <position position="693"/>
    </location>
    <ligand>
        <name>Mg(2+)</name>
        <dbReference type="ChEBI" id="CHEBI:18420"/>
    </ligand>
</feature>
<gene>
    <name type="primary">copA</name>
    <name type="ordered locus">SSP0297</name>
</gene>
<name>COPA_STAS1</name>
<proteinExistence type="inferred from homology"/>
<accession>Q4A0G1</accession>
<organism>
    <name type="scientific">Staphylococcus saprophyticus subsp. saprophyticus (strain ATCC 15305 / DSM 20229 / NCIMB 8711 / NCTC 7292 / S-41)</name>
    <dbReference type="NCBI Taxonomy" id="342451"/>
    <lineage>
        <taxon>Bacteria</taxon>
        <taxon>Bacillati</taxon>
        <taxon>Bacillota</taxon>
        <taxon>Bacilli</taxon>
        <taxon>Bacillales</taxon>
        <taxon>Staphylococcaceae</taxon>
        <taxon>Staphylococcus</taxon>
    </lineage>
</organism>
<reference key="1">
    <citation type="journal article" date="2005" name="Proc. Natl. Acad. Sci. U.S.A.">
        <title>Whole genome sequence of Staphylococcus saprophyticus reveals the pathogenesis of uncomplicated urinary tract infection.</title>
        <authorList>
            <person name="Kuroda M."/>
            <person name="Yamashita A."/>
            <person name="Hirakawa H."/>
            <person name="Kumano M."/>
            <person name="Morikawa K."/>
            <person name="Higashide M."/>
            <person name="Maruyama A."/>
            <person name="Inose Y."/>
            <person name="Matoba K."/>
            <person name="Toh H."/>
            <person name="Kuhara S."/>
            <person name="Hattori M."/>
            <person name="Ohta T."/>
        </authorList>
    </citation>
    <scope>NUCLEOTIDE SEQUENCE [LARGE SCALE GENOMIC DNA]</scope>
    <source>
        <strain>ATCC 15305 / DSM 20229 / NCIMB 8711 / NCTC 7292 / S-41</strain>
    </source>
</reference>
<keyword id="KW-0067">ATP-binding</keyword>
<keyword id="KW-1003">Cell membrane</keyword>
<keyword id="KW-0186">Copper</keyword>
<keyword id="KW-0187">Copper transport</keyword>
<keyword id="KW-0406">Ion transport</keyword>
<keyword id="KW-0460">Magnesium</keyword>
<keyword id="KW-0472">Membrane</keyword>
<keyword id="KW-0479">Metal-binding</keyword>
<keyword id="KW-0547">Nucleotide-binding</keyword>
<keyword id="KW-0597">Phosphoprotein</keyword>
<keyword id="KW-1185">Reference proteome</keyword>
<keyword id="KW-0677">Repeat</keyword>
<keyword id="KW-1278">Translocase</keyword>
<keyword id="KW-0812">Transmembrane</keyword>
<keyword id="KW-1133">Transmembrane helix</keyword>
<keyword id="KW-0813">Transport</keyword>
<dbReference type="EC" id="7.2.2.8"/>
<dbReference type="EMBL" id="AP008934">
    <property type="protein sequence ID" value="BAE17442.1"/>
    <property type="molecule type" value="Genomic_DNA"/>
</dbReference>
<dbReference type="RefSeq" id="WP_011302281.1">
    <property type="nucleotide sequence ID" value="NZ_MTGA01000037.1"/>
</dbReference>
<dbReference type="SMR" id="Q4A0G1"/>
<dbReference type="GeneID" id="3615947"/>
<dbReference type="KEGG" id="ssp:SSP0297"/>
<dbReference type="PATRIC" id="fig|342451.11.peg.300"/>
<dbReference type="eggNOG" id="COG2217">
    <property type="taxonomic scope" value="Bacteria"/>
</dbReference>
<dbReference type="HOGENOM" id="CLU_001771_0_3_9"/>
<dbReference type="OrthoDB" id="9813266at2"/>
<dbReference type="Proteomes" id="UP000006371">
    <property type="component" value="Chromosome"/>
</dbReference>
<dbReference type="GO" id="GO:0005886">
    <property type="term" value="C:plasma membrane"/>
    <property type="evidence" value="ECO:0007669"/>
    <property type="project" value="UniProtKB-SubCell"/>
</dbReference>
<dbReference type="GO" id="GO:0005524">
    <property type="term" value="F:ATP binding"/>
    <property type="evidence" value="ECO:0007669"/>
    <property type="project" value="UniProtKB-KW"/>
</dbReference>
<dbReference type="GO" id="GO:0016887">
    <property type="term" value="F:ATP hydrolysis activity"/>
    <property type="evidence" value="ECO:0007669"/>
    <property type="project" value="InterPro"/>
</dbReference>
<dbReference type="GO" id="GO:0005507">
    <property type="term" value="F:copper ion binding"/>
    <property type="evidence" value="ECO:0007669"/>
    <property type="project" value="InterPro"/>
</dbReference>
<dbReference type="GO" id="GO:0043682">
    <property type="term" value="F:P-type divalent copper transporter activity"/>
    <property type="evidence" value="ECO:0007669"/>
    <property type="project" value="TreeGrafter"/>
</dbReference>
<dbReference type="GO" id="GO:0140581">
    <property type="term" value="F:P-type monovalent copper transporter activity"/>
    <property type="evidence" value="ECO:0007669"/>
    <property type="project" value="UniProtKB-EC"/>
</dbReference>
<dbReference type="GO" id="GO:0055070">
    <property type="term" value="P:copper ion homeostasis"/>
    <property type="evidence" value="ECO:0007669"/>
    <property type="project" value="TreeGrafter"/>
</dbReference>
<dbReference type="CDD" id="cd00371">
    <property type="entry name" value="HMA"/>
    <property type="match status" value="2"/>
</dbReference>
<dbReference type="CDD" id="cd02094">
    <property type="entry name" value="P-type_ATPase_Cu-like"/>
    <property type="match status" value="1"/>
</dbReference>
<dbReference type="FunFam" id="2.70.150.10:FF:000020">
    <property type="entry name" value="Copper-exporting P-type ATPase A"/>
    <property type="match status" value="1"/>
</dbReference>
<dbReference type="FunFam" id="3.30.70.100:FF:000005">
    <property type="entry name" value="Copper-exporting P-type ATPase A"/>
    <property type="match status" value="2"/>
</dbReference>
<dbReference type="FunFam" id="3.40.50.1000:FF:000144">
    <property type="entry name" value="copper-transporting ATPase 1 isoform X2"/>
    <property type="match status" value="1"/>
</dbReference>
<dbReference type="Gene3D" id="3.30.70.100">
    <property type="match status" value="2"/>
</dbReference>
<dbReference type="Gene3D" id="3.40.1110.10">
    <property type="entry name" value="Calcium-transporting ATPase, cytoplasmic domain N"/>
    <property type="match status" value="2"/>
</dbReference>
<dbReference type="Gene3D" id="2.70.150.10">
    <property type="entry name" value="Calcium-transporting ATPase, cytoplasmic transduction domain A"/>
    <property type="match status" value="1"/>
</dbReference>
<dbReference type="Gene3D" id="3.40.50.1000">
    <property type="entry name" value="HAD superfamily/HAD-like"/>
    <property type="match status" value="1"/>
</dbReference>
<dbReference type="InterPro" id="IPR023299">
    <property type="entry name" value="ATPase_P-typ_cyto_dom_N"/>
</dbReference>
<dbReference type="InterPro" id="IPR018303">
    <property type="entry name" value="ATPase_P-typ_P_site"/>
</dbReference>
<dbReference type="InterPro" id="IPR023298">
    <property type="entry name" value="ATPase_P-typ_TM_dom_sf"/>
</dbReference>
<dbReference type="InterPro" id="IPR008250">
    <property type="entry name" value="ATPase_P-typ_transduc_dom_A_sf"/>
</dbReference>
<dbReference type="InterPro" id="IPR036412">
    <property type="entry name" value="HAD-like_sf"/>
</dbReference>
<dbReference type="InterPro" id="IPR023214">
    <property type="entry name" value="HAD_sf"/>
</dbReference>
<dbReference type="InterPro" id="IPR017969">
    <property type="entry name" value="Heavy-metal-associated_CS"/>
</dbReference>
<dbReference type="InterPro" id="IPR006122">
    <property type="entry name" value="HMA_Cu_ion-bd"/>
</dbReference>
<dbReference type="InterPro" id="IPR006121">
    <property type="entry name" value="HMA_dom"/>
</dbReference>
<dbReference type="InterPro" id="IPR036163">
    <property type="entry name" value="HMA_dom_sf"/>
</dbReference>
<dbReference type="InterPro" id="IPR027256">
    <property type="entry name" value="P-typ_ATPase_IB"/>
</dbReference>
<dbReference type="InterPro" id="IPR001757">
    <property type="entry name" value="P_typ_ATPase"/>
</dbReference>
<dbReference type="InterPro" id="IPR044492">
    <property type="entry name" value="P_typ_ATPase_HD_dom"/>
</dbReference>
<dbReference type="NCBIfam" id="TIGR01511">
    <property type="entry name" value="ATPase-IB1_Cu"/>
    <property type="match status" value="1"/>
</dbReference>
<dbReference type="NCBIfam" id="TIGR01525">
    <property type="entry name" value="ATPase-IB_hvy"/>
    <property type="match status" value="1"/>
</dbReference>
<dbReference type="NCBIfam" id="TIGR01494">
    <property type="entry name" value="ATPase_P-type"/>
    <property type="match status" value="1"/>
</dbReference>
<dbReference type="NCBIfam" id="TIGR00003">
    <property type="entry name" value="copper ion binding protein"/>
    <property type="match status" value="2"/>
</dbReference>
<dbReference type="PANTHER" id="PTHR43520">
    <property type="entry name" value="ATP7, ISOFORM B"/>
    <property type="match status" value="1"/>
</dbReference>
<dbReference type="PANTHER" id="PTHR43520:SF8">
    <property type="entry name" value="P-TYPE CU(+) TRANSPORTER"/>
    <property type="match status" value="1"/>
</dbReference>
<dbReference type="Pfam" id="PF00122">
    <property type="entry name" value="E1-E2_ATPase"/>
    <property type="match status" value="1"/>
</dbReference>
<dbReference type="Pfam" id="PF00403">
    <property type="entry name" value="HMA"/>
    <property type="match status" value="2"/>
</dbReference>
<dbReference type="Pfam" id="PF00702">
    <property type="entry name" value="Hydrolase"/>
    <property type="match status" value="1"/>
</dbReference>
<dbReference type="PRINTS" id="PR00119">
    <property type="entry name" value="CATATPASE"/>
</dbReference>
<dbReference type="PRINTS" id="PR00943">
    <property type="entry name" value="CUATPASE"/>
</dbReference>
<dbReference type="SFLD" id="SFLDS00003">
    <property type="entry name" value="Haloacid_Dehalogenase"/>
    <property type="match status" value="1"/>
</dbReference>
<dbReference type="SFLD" id="SFLDF00027">
    <property type="entry name" value="p-type_atpase"/>
    <property type="match status" value="1"/>
</dbReference>
<dbReference type="SUPFAM" id="SSF81653">
    <property type="entry name" value="Calcium ATPase, transduction domain A"/>
    <property type="match status" value="1"/>
</dbReference>
<dbReference type="SUPFAM" id="SSF81665">
    <property type="entry name" value="Calcium ATPase, transmembrane domain M"/>
    <property type="match status" value="1"/>
</dbReference>
<dbReference type="SUPFAM" id="SSF56784">
    <property type="entry name" value="HAD-like"/>
    <property type="match status" value="1"/>
</dbReference>
<dbReference type="SUPFAM" id="SSF55008">
    <property type="entry name" value="HMA, heavy metal-associated domain"/>
    <property type="match status" value="2"/>
</dbReference>
<dbReference type="PROSITE" id="PS00154">
    <property type="entry name" value="ATPASE_E1_E2"/>
    <property type="match status" value="1"/>
</dbReference>
<dbReference type="PROSITE" id="PS01047">
    <property type="entry name" value="HMA_1"/>
    <property type="match status" value="2"/>
</dbReference>
<dbReference type="PROSITE" id="PS50846">
    <property type="entry name" value="HMA_2"/>
    <property type="match status" value="2"/>
</dbReference>
<protein>
    <recommendedName>
        <fullName>Copper-exporting P-type ATPase</fullName>
        <ecNumber>7.2.2.8</ecNumber>
    </recommendedName>
    <alternativeName>
        <fullName>Copper-exporting P-type ATPase A</fullName>
    </alternativeName>
    <alternativeName>
        <fullName>Cu(+)-exporting ATPase</fullName>
    </alternativeName>
</protein>
<comment type="function">
    <text evidence="1">Involved in copper export.</text>
</comment>
<comment type="catalytic activity">
    <reaction>
        <text>Cu(+)(in) + ATP + H2O = Cu(+)(out) + ADP + phosphate + H(+)</text>
        <dbReference type="Rhea" id="RHEA:25792"/>
        <dbReference type="ChEBI" id="CHEBI:15377"/>
        <dbReference type="ChEBI" id="CHEBI:15378"/>
        <dbReference type="ChEBI" id="CHEBI:30616"/>
        <dbReference type="ChEBI" id="CHEBI:43474"/>
        <dbReference type="ChEBI" id="CHEBI:49552"/>
        <dbReference type="ChEBI" id="CHEBI:456216"/>
        <dbReference type="EC" id="7.2.2.8"/>
    </reaction>
</comment>
<comment type="subcellular location">
    <subcellularLocation>
        <location evidence="1">Cell membrane</location>
        <topology evidence="1">Multi-pass membrane protein</topology>
    </subcellularLocation>
</comment>
<comment type="similarity">
    <text evidence="4">Belongs to the cation transport ATPase (P-type) (TC 3.A.3) family. Type IB subfamily.</text>
</comment>